<accession>P75160</accession>
<organism>
    <name type="scientific">Mycoplasma pneumoniae (strain ATCC 29342 / M129 / Subtype 1)</name>
    <name type="common">Mycoplasmoides pneumoniae</name>
    <dbReference type="NCBI Taxonomy" id="272634"/>
    <lineage>
        <taxon>Bacteria</taxon>
        <taxon>Bacillati</taxon>
        <taxon>Mycoplasmatota</taxon>
        <taxon>Mycoplasmoidales</taxon>
        <taxon>Mycoplasmoidaceae</taxon>
        <taxon>Mycoplasmoides</taxon>
    </lineage>
</organism>
<comment type="catalytic activity">
    <reaction>
        <text>a 1,2-diacyl-sn-glycero-3-phosphate + CTP + H(+) = a CDP-1,2-diacyl-sn-glycerol + diphosphate</text>
        <dbReference type="Rhea" id="RHEA:16229"/>
        <dbReference type="ChEBI" id="CHEBI:15378"/>
        <dbReference type="ChEBI" id="CHEBI:33019"/>
        <dbReference type="ChEBI" id="CHEBI:37563"/>
        <dbReference type="ChEBI" id="CHEBI:58332"/>
        <dbReference type="ChEBI" id="CHEBI:58608"/>
        <dbReference type="EC" id="2.7.7.41"/>
    </reaction>
</comment>
<comment type="pathway">
    <text>Phospholipid metabolism; CDP-diacylglycerol biosynthesis; CDP-diacylglycerol from sn-glycerol 3-phosphate: step 3/3.</text>
</comment>
<comment type="subcellular location">
    <subcellularLocation>
        <location evidence="1">Cell membrane</location>
        <topology evidence="1">Multi-pass membrane protein</topology>
    </subcellularLocation>
</comment>
<comment type="similarity">
    <text evidence="3">Belongs to the CDS family.</text>
</comment>
<keyword id="KW-1003">Cell membrane</keyword>
<keyword id="KW-0444">Lipid biosynthesis</keyword>
<keyword id="KW-0443">Lipid metabolism</keyword>
<keyword id="KW-0472">Membrane</keyword>
<keyword id="KW-0548">Nucleotidyltransferase</keyword>
<keyword id="KW-0594">Phospholipid biosynthesis</keyword>
<keyword id="KW-1208">Phospholipid metabolism</keyword>
<keyword id="KW-1185">Reference proteome</keyword>
<keyword id="KW-0808">Transferase</keyword>
<keyword id="KW-0812">Transmembrane</keyword>
<keyword id="KW-1133">Transmembrane helix</keyword>
<feature type="chain" id="PRO_0000090740" description="Putative phosphatidate cytidylyltransferase">
    <location>
        <begin position="1"/>
        <end position="395"/>
    </location>
</feature>
<feature type="transmembrane region" description="Helical" evidence="2">
    <location>
        <begin position="13"/>
        <end position="33"/>
    </location>
</feature>
<feature type="transmembrane region" description="Helical" evidence="2">
    <location>
        <begin position="78"/>
        <end position="98"/>
    </location>
</feature>
<feature type="transmembrane region" description="Helical" evidence="2">
    <location>
        <begin position="115"/>
        <end position="135"/>
    </location>
</feature>
<feature type="transmembrane region" description="Helical" evidence="2">
    <location>
        <begin position="144"/>
        <end position="164"/>
    </location>
</feature>
<feature type="transmembrane region" description="Helical" evidence="2">
    <location>
        <begin position="177"/>
        <end position="197"/>
    </location>
</feature>
<feature type="transmembrane region" description="Helical" evidence="2">
    <location>
        <begin position="201"/>
        <end position="221"/>
    </location>
</feature>
<feature type="transmembrane region" description="Helical" evidence="2">
    <location>
        <begin position="242"/>
        <end position="262"/>
    </location>
</feature>
<feature type="transmembrane region" description="Helical" evidence="2">
    <location>
        <begin position="306"/>
        <end position="326"/>
    </location>
</feature>
<feature type="transmembrane region" description="Helical" evidence="2">
    <location>
        <begin position="358"/>
        <end position="378"/>
    </location>
</feature>
<gene>
    <name type="primary">cdsA</name>
    <name type="ordered locus">MPN_637</name>
    <name type="ORF">MP205</name>
</gene>
<evidence type="ECO:0000250" key="1"/>
<evidence type="ECO:0000255" key="2"/>
<evidence type="ECO:0000305" key="3"/>
<protein>
    <recommendedName>
        <fullName>Putative phosphatidate cytidylyltransferase</fullName>
        <ecNumber>2.7.7.41</ecNumber>
    </recommendedName>
    <alternativeName>
        <fullName>CDP-DAG synthase</fullName>
    </alternativeName>
    <alternativeName>
        <fullName>CDP-DG synthase</fullName>
    </alternativeName>
    <alternativeName>
        <fullName>CDP-diacylglycerol synthase</fullName>
        <shortName>CDS</shortName>
    </alternativeName>
    <alternativeName>
        <fullName>CDP-diglyceride pyrophosphorylase</fullName>
    </alternativeName>
    <alternativeName>
        <fullName>CDP-diglyceride synthase</fullName>
    </alternativeName>
    <alternativeName>
        <fullName>CTP:phosphatidate cytidylyltransferase</fullName>
    </alternativeName>
</protein>
<reference key="1">
    <citation type="journal article" date="1996" name="Nucleic Acids Res.">
        <title>Complete sequence analysis of the genome of the bacterium Mycoplasma pneumoniae.</title>
        <authorList>
            <person name="Himmelreich R."/>
            <person name="Hilbert H."/>
            <person name="Plagens H."/>
            <person name="Pirkl E."/>
            <person name="Li B.-C."/>
            <person name="Herrmann R."/>
        </authorList>
    </citation>
    <scope>NUCLEOTIDE SEQUENCE [LARGE SCALE GENOMIC DNA]</scope>
    <source>
        <strain>ATCC 29342 / M129 / Subtype 1</strain>
    </source>
</reference>
<dbReference type="EC" id="2.7.7.41"/>
<dbReference type="EMBL" id="U00089">
    <property type="protein sequence ID" value="AAB95853.1"/>
    <property type="molecule type" value="Genomic_DNA"/>
</dbReference>
<dbReference type="PIR" id="S73531">
    <property type="entry name" value="S73531"/>
</dbReference>
<dbReference type="RefSeq" id="NP_110326.1">
    <property type="nucleotide sequence ID" value="NC_000912.1"/>
</dbReference>
<dbReference type="RefSeq" id="WP_010874994.1">
    <property type="nucleotide sequence ID" value="NZ_OU342337.1"/>
</dbReference>
<dbReference type="STRING" id="272634.MPN_637"/>
<dbReference type="EnsemblBacteria" id="AAB95853">
    <property type="protein sequence ID" value="AAB95853"/>
    <property type="gene ID" value="MPN_637"/>
</dbReference>
<dbReference type="KEGG" id="mpn:MPN_637"/>
<dbReference type="PATRIC" id="fig|272634.6.peg.700"/>
<dbReference type="HOGENOM" id="CLU_694118_0_0_14"/>
<dbReference type="OrthoDB" id="9799199at2"/>
<dbReference type="BioCyc" id="MPNE272634:G1GJ3-1020-MONOMER"/>
<dbReference type="UniPathway" id="UPA00557">
    <property type="reaction ID" value="UER00614"/>
</dbReference>
<dbReference type="Proteomes" id="UP000000808">
    <property type="component" value="Chromosome"/>
</dbReference>
<dbReference type="GO" id="GO:0005886">
    <property type="term" value="C:plasma membrane"/>
    <property type="evidence" value="ECO:0007669"/>
    <property type="project" value="UniProtKB-SubCell"/>
</dbReference>
<dbReference type="GO" id="GO:0004605">
    <property type="term" value="F:phosphatidate cytidylyltransferase activity"/>
    <property type="evidence" value="ECO:0007669"/>
    <property type="project" value="UniProtKB-EC"/>
</dbReference>
<dbReference type="GO" id="GO:0016024">
    <property type="term" value="P:CDP-diacylglycerol biosynthetic process"/>
    <property type="evidence" value="ECO:0007669"/>
    <property type="project" value="UniProtKB-UniPathway"/>
</dbReference>
<dbReference type="InterPro" id="IPR000374">
    <property type="entry name" value="PC_trans"/>
</dbReference>
<dbReference type="InterPro" id="IPR016720">
    <property type="entry name" value="PC_Trfase_euk"/>
</dbReference>
<dbReference type="PANTHER" id="PTHR13773">
    <property type="entry name" value="PHOSPHATIDATE CYTIDYLYLTRANSFERASE"/>
    <property type="match status" value="1"/>
</dbReference>
<dbReference type="PANTHER" id="PTHR13773:SF8">
    <property type="entry name" value="PHOSPHATIDATE CYTIDYLYLTRANSFERASE, PHOTORECEPTOR-SPECIFIC"/>
    <property type="match status" value="1"/>
</dbReference>
<dbReference type="Pfam" id="PF01148">
    <property type="entry name" value="CTP_transf_1"/>
    <property type="match status" value="1"/>
</dbReference>
<dbReference type="PROSITE" id="PS01315">
    <property type="entry name" value="CDS"/>
    <property type="match status" value="1"/>
</dbReference>
<name>CDSA_MYCPN</name>
<proteinExistence type="inferred from homology"/>
<sequence>MDLKDNSFAKKRSTVFVVLLIVFCFFLMFSAFADGFNFWSPWSTDFNSRVIHIKSDGNIETTSIVSHELHPDFKAVRFAFGLVIVLFISVIAVLMNWELSNSIFKNYEKLNLSLSLLSGIMVSGGMIPTFFVIYFREWNATVNWIWTASFAGMIVFLWAVYMISTSFIKIRPSLQVIYSLGAVICFIACIGTIYFSVIRGWTTIFLLIAIGVCTDTFAYLFGKRFGKNPLIKISPSKTWEGAFFGVTGTVLTISIICVLYSIPNYVRQPSIKDASKTALQTPQNYDVHNLITNVFLISFISGGSTFYIYWWVSTLALIFTASIFAIGGDLFFSYIKRLTKIKDFSKLLGKHGGILDRFDSSSFLISFFFIYHVIAGISSNQRLLMEPNTYFSAVS</sequence>